<organism>
    <name type="scientific">Rickettsia massiliae (strain Mtu5)</name>
    <dbReference type="NCBI Taxonomy" id="416276"/>
    <lineage>
        <taxon>Bacteria</taxon>
        <taxon>Pseudomonadati</taxon>
        <taxon>Pseudomonadota</taxon>
        <taxon>Alphaproteobacteria</taxon>
        <taxon>Rickettsiales</taxon>
        <taxon>Rickettsiaceae</taxon>
        <taxon>Rickettsieae</taxon>
        <taxon>Rickettsia</taxon>
        <taxon>spotted fever group</taxon>
    </lineage>
</organism>
<evidence type="ECO:0000255" key="1">
    <source>
        <dbReference type="HAMAP-Rule" id="MF_00073"/>
    </source>
</evidence>
<gene>
    <name evidence="1" type="primary">nusB</name>
    <name type="ordered locus">RMA_0212</name>
</gene>
<keyword id="KW-0694">RNA-binding</keyword>
<keyword id="KW-0804">Transcription</keyword>
<keyword id="KW-0889">Transcription antitermination</keyword>
<keyword id="KW-0805">Transcription regulation</keyword>
<sequence length="156" mass="17779">MSSNKINKKSIARIAAVQAIYQNILQNNDDMDDIMQNVLSFYQNNNSITDLPENLKISLSISHFKMLVKSVFENINKLDEIIDNHLTNDKDPAHMPILLRALLRVSICELLFCPTTPAKVVINEYTDIANDMLNEHEIGFVNSVLDKIAKEHTRLI</sequence>
<dbReference type="EMBL" id="CP000683">
    <property type="protein sequence ID" value="ABV84506.1"/>
    <property type="molecule type" value="Genomic_DNA"/>
</dbReference>
<dbReference type="RefSeq" id="WP_012152483.1">
    <property type="nucleotide sequence ID" value="NC_009900.1"/>
</dbReference>
<dbReference type="SMR" id="A8F0S0"/>
<dbReference type="GeneID" id="34514610"/>
<dbReference type="KEGG" id="rms:RMA_0212"/>
<dbReference type="HOGENOM" id="CLU_087843_4_3_5"/>
<dbReference type="Proteomes" id="UP000001311">
    <property type="component" value="Chromosome"/>
</dbReference>
<dbReference type="GO" id="GO:0005829">
    <property type="term" value="C:cytosol"/>
    <property type="evidence" value="ECO:0007669"/>
    <property type="project" value="TreeGrafter"/>
</dbReference>
<dbReference type="GO" id="GO:0003723">
    <property type="term" value="F:RNA binding"/>
    <property type="evidence" value="ECO:0007669"/>
    <property type="project" value="UniProtKB-UniRule"/>
</dbReference>
<dbReference type="GO" id="GO:0006353">
    <property type="term" value="P:DNA-templated transcription termination"/>
    <property type="evidence" value="ECO:0007669"/>
    <property type="project" value="UniProtKB-UniRule"/>
</dbReference>
<dbReference type="GO" id="GO:0031564">
    <property type="term" value="P:transcription antitermination"/>
    <property type="evidence" value="ECO:0007669"/>
    <property type="project" value="UniProtKB-KW"/>
</dbReference>
<dbReference type="CDD" id="cd00619">
    <property type="entry name" value="Terminator_NusB"/>
    <property type="match status" value="1"/>
</dbReference>
<dbReference type="Gene3D" id="1.10.940.10">
    <property type="entry name" value="NusB-like"/>
    <property type="match status" value="1"/>
</dbReference>
<dbReference type="HAMAP" id="MF_00073">
    <property type="entry name" value="NusB"/>
    <property type="match status" value="1"/>
</dbReference>
<dbReference type="InterPro" id="IPR035926">
    <property type="entry name" value="NusB-like_sf"/>
</dbReference>
<dbReference type="InterPro" id="IPR011605">
    <property type="entry name" value="NusB_fam"/>
</dbReference>
<dbReference type="InterPro" id="IPR006027">
    <property type="entry name" value="NusB_RsmB_TIM44"/>
</dbReference>
<dbReference type="NCBIfam" id="TIGR01951">
    <property type="entry name" value="nusB"/>
    <property type="match status" value="1"/>
</dbReference>
<dbReference type="PANTHER" id="PTHR11078:SF3">
    <property type="entry name" value="ANTITERMINATION NUSB DOMAIN-CONTAINING PROTEIN"/>
    <property type="match status" value="1"/>
</dbReference>
<dbReference type="PANTHER" id="PTHR11078">
    <property type="entry name" value="N UTILIZATION SUBSTANCE PROTEIN B-RELATED"/>
    <property type="match status" value="1"/>
</dbReference>
<dbReference type="Pfam" id="PF01029">
    <property type="entry name" value="NusB"/>
    <property type="match status" value="1"/>
</dbReference>
<dbReference type="SUPFAM" id="SSF48013">
    <property type="entry name" value="NusB-like"/>
    <property type="match status" value="1"/>
</dbReference>
<comment type="function">
    <text evidence="1">Involved in transcription antitermination. Required for transcription of ribosomal RNA (rRNA) genes. Binds specifically to the boxA antiterminator sequence of the ribosomal RNA (rrn) operons.</text>
</comment>
<comment type="similarity">
    <text evidence="1">Belongs to the NusB family.</text>
</comment>
<feature type="chain" id="PRO_1000057499" description="Transcription antitermination protein NusB">
    <location>
        <begin position="1"/>
        <end position="156"/>
    </location>
</feature>
<reference key="1">
    <citation type="journal article" date="2007" name="Genome Res.">
        <title>Lateral gene transfer between obligate intracellular bacteria: evidence from the Rickettsia massiliae genome.</title>
        <authorList>
            <person name="Blanc G."/>
            <person name="Ogata H."/>
            <person name="Robert C."/>
            <person name="Audic S."/>
            <person name="Claverie J.-M."/>
            <person name="Raoult D."/>
        </authorList>
    </citation>
    <scope>NUCLEOTIDE SEQUENCE [LARGE SCALE GENOMIC DNA]</scope>
    <source>
        <strain>Mtu5</strain>
    </source>
</reference>
<protein>
    <recommendedName>
        <fullName evidence="1">Transcription antitermination protein NusB</fullName>
    </recommendedName>
    <alternativeName>
        <fullName evidence="1">Antitermination factor NusB</fullName>
    </alternativeName>
</protein>
<accession>A8F0S0</accession>
<proteinExistence type="inferred from homology"/>
<name>NUSB_RICM5</name>